<dbReference type="EC" id="4.2.3.5" evidence="1"/>
<dbReference type="EMBL" id="CP000114">
    <property type="protein sequence ID" value="ABA44666.1"/>
    <property type="molecule type" value="Genomic_DNA"/>
</dbReference>
<dbReference type="RefSeq" id="WP_001269902.1">
    <property type="nucleotide sequence ID" value="NC_007432.1"/>
</dbReference>
<dbReference type="SMR" id="Q3K0D5"/>
<dbReference type="GeneID" id="66886253"/>
<dbReference type="KEGG" id="sak:SAK_1410"/>
<dbReference type="HOGENOM" id="CLU_034547_2_0_9"/>
<dbReference type="UniPathway" id="UPA00053">
    <property type="reaction ID" value="UER00090"/>
</dbReference>
<dbReference type="GO" id="GO:0005829">
    <property type="term" value="C:cytosol"/>
    <property type="evidence" value="ECO:0007669"/>
    <property type="project" value="TreeGrafter"/>
</dbReference>
<dbReference type="GO" id="GO:0004107">
    <property type="term" value="F:chorismate synthase activity"/>
    <property type="evidence" value="ECO:0007669"/>
    <property type="project" value="UniProtKB-UniRule"/>
</dbReference>
<dbReference type="GO" id="GO:0010181">
    <property type="term" value="F:FMN binding"/>
    <property type="evidence" value="ECO:0007669"/>
    <property type="project" value="TreeGrafter"/>
</dbReference>
<dbReference type="GO" id="GO:0008652">
    <property type="term" value="P:amino acid biosynthetic process"/>
    <property type="evidence" value="ECO:0007669"/>
    <property type="project" value="UniProtKB-KW"/>
</dbReference>
<dbReference type="GO" id="GO:0009073">
    <property type="term" value="P:aromatic amino acid family biosynthetic process"/>
    <property type="evidence" value="ECO:0007669"/>
    <property type="project" value="UniProtKB-KW"/>
</dbReference>
<dbReference type="GO" id="GO:0009423">
    <property type="term" value="P:chorismate biosynthetic process"/>
    <property type="evidence" value="ECO:0007669"/>
    <property type="project" value="UniProtKB-UniRule"/>
</dbReference>
<dbReference type="CDD" id="cd07304">
    <property type="entry name" value="Chorismate_synthase"/>
    <property type="match status" value="1"/>
</dbReference>
<dbReference type="FunFam" id="3.60.150.10:FF:000002">
    <property type="entry name" value="Chorismate synthase"/>
    <property type="match status" value="1"/>
</dbReference>
<dbReference type="Gene3D" id="3.60.150.10">
    <property type="entry name" value="Chorismate synthase AroC"/>
    <property type="match status" value="1"/>
</dbReference>
<dbReference type="HAMAP" id="MF_00300">
    <property type="entry name" value="Chorismate_synth"/>
    <property type="match status" value="1"/>
</dbReference>
<dbReference type="InterPro" id="IPR000453">
    <property type="entry name" value="Chorismate_synth"/>
</dbReference>
<dbReference type="InterPro" id="IPR035904">
    <property type="entry name" value="Chorismate_synth_AroC_sf"/>
</dbReference>
<dbReference type="InterPro" id="IPR020541">
    <property type="entry name" value="Chorismate_synthase_CS"/>
</dbReference>
<dbReference type="NCBIfam" id="TIGR00033">
    <property type="entry name" value="aroC"/>
    <property type="match status" value="1"/>
</dbReference>
<dbReference type="NCBIfam" id="NF003793">
    <property type="entry name" value="PRK05382.1"/>
    <property type="match status" value="1"/>
</dbReference>
<dbReference type="PANTHER" id="PTHR21085">
    <property type="entry name" value="CHORISMATE SYNTHASE"/>
    <property type="match status" value="1"/>
</dbReference>
<dbReference type="PANTHER" id="PTHR21085:SF0">
    <property type="entry name" value="CHORISMATE SYNTHASE"/>
    <property type="match status" value="1"/>
</dbReference>
<dbReference type="Pfam" id="PF01264">
    <property type="entry name" value="Chorismate_synt"/>
    <property type="match status" value="1"/>
</dbReference>
<dbReference type="PIRSF" id="PIRSF001456">
    <property type="entry name" value="Chorismate_synth"/>
    <property type="match status" value="1"/>
</dbReference>
<dbReference type="SUPFAM" id="SSF103263">
    <property type="entry name" value="Chorismate synthase, AroC"/>
    <property type="match status" value="1"/>
</dbReference>
<dbReference type="PROSITE" id="PS00787">
    <property type="entry name" value="CHORISMATE_SYNTHASE_1"/>
    <property type="match status" value="1"/>
</dbReference>
<dbReference type="PROSITE" id="PS00788">
    <property type="entry name" value="CHORISMATE_SYNTHASE_2"/>
    <property type="match status" value="1"/>
</dbReference>
<dbReference type="PROSITE" id="PS00789">
    <property type="entry name" value="CHORISMATE_SYNTHASE_3"/>
    <property type="match status" value="1"/>
</dbReference>
<sequence length="388" mass="42625">MRYLTAGESHGPSLTAIIEGIPAGLKLSAKDINEDLKRRQGGYGRGNRMKIETDQVIISSGVRHGKTLGSPITLTVTNKDHSKWLDIMSVEDIEERLKQKRRIKHPRPGHADLVGGIKYRFDDLRNALERSSARETTMRVAIGAIAKRILKEIGIEIANHIVVFGGKEITVPDKLTVQQIKVLSSQSQVAIVNPSFEQEIKDYIDSVKKAGDTIGGVIETIVGGVPVGLGSYVHWDRKLDAKIAQAVVSINAFKGVEFGLGFKSGFLKGSQVMDSISWTKDQGYIRQSNNLGGFEGGMTNGEPIVVRGVMKPIPTLYKPLMSVDIDTHEPYRATVERSDPTALPAAGVVMEAVVATVLVTEVLEKFSSDNMYELKEAVKLYRNYVNHF</sequence>
<protein>
    <recommendedName>
        <fullName evidence="1">Chorismate synthase</fullName>
        <shortName evidence="1">CS</shortName>
        <ecNumber evidence="1">4.2.3.5</ecNumber>
    </recommendedName>
    <alternativeName>
        <fullName evidence="1">5-enolpyruvylshikimate-3-phosphate phospholyase</fullName>
    </alternativeName>
</protein>
<keyword id="KW-0028">Amino-acid biosynthesis</keyword>
<keyword id="KW-0057">Aromatic amino acid biosynthesis</keyword>
<keyword id="KW-0274">FAD</keyword>
<keyword id="KW-0285">Flavoprotein</keyword>
<keyword id="KW-0288">FMN</keyword>
<keyword id="KW-0456">Lyase</keyword>
<keyword id="KW-0521">NADP</keyword>
<name>AROC_STRA1</name>
<reference key="1">
    <citation type="journal article" date="2005" name="Proc. Natl. Acad. Sci. U.S.A.">
        <title>Genome analysis of multiple pathogenic isolates of Streptococcus agalactiae: implications for the microbial 'pan-genome'.</title>
        <authorList>
            <person name="Tettelin H."/>
            <person name="Masignani V."/>
            <person name="Cieslewicz M.J."/>
            <person name="Donati C."/>
            <person name="Medini D."/>
            <person name="Ward N.L."/>
            <person name="Angiuoli S.V."/>
            <person name="Crabtree J."/>
            <person name="Jones A.L."/>
            <person name="Durkin A.S."/>
            <person name="DeBoy R.T."/>
            <person name="Davidsen T.M."/>
            <person name="Mora M."/>
            <person name="Scarselli M."/>
            <person name="Margarit y Ros I."/>
            <person name="Peterson J.D."/>
            <person name="Hauser C.R."/>
            <person name="Sundaram J.P."/>
            <person name="Nelson W.C."/>
            <person name="Madupu R."/>
            <person name="Brinkac L.M."/>
            <person name="Dodson R.J."/>
            <person name="Rosovitz M.J."/>
            <person name="Sullivan S.A."/>
            <person name="Daugherty S.C."/>
            <person name="Haft D.H."/>
            <person name="Selengut J."/>
            <person name="Gwinn M.L."/>
            <person name="Zhou L."/>
            <person name="Zafar N."/>
            <person name="Khouri H."/>
            <person name="Radune D."/>
            <person name="Dimitrov G."/>
            <person name="Watkins K."/>
            <person name="O'Connor K.J."/>
            <person name="Smith S."/>
            <person name="Utterback T.R."/>
            <person name="White O."/>
            <person name="Rubens C.E."/>
            <person name="Grandi G."/>
            <person name="Madoff L.C."/>
            <person name="Kasper D.L."/>
            <person name="Telford J.L."/>
            <person name="Wessels M.R."/>
            <person name="Rappuoli R."/>
            <person name="Fraser C.M."/>
        </authorList>
    </citation>
    <scope>NUCLEOTIDE SEQUENCE [LARGE SCALE GENOMIC DNA]</scope>
    <source>
        <strain>ATCC 27591 / A909 / CDC SS700</strain>
    </source>
</reference>
<organism>
    <name type="scientific">Streptococcus agalactiae serotype Ia (strain ATCC 27591 / A909 / CDC SS700)</name>
    <dbReference type="NCBI Taxonomy" id="205921"/>
    <lineage>
        <taxon>Bacteria</taxon>
        <taxon>Bacillati</taxon>
        <taxon>Bacillota</taxon>
        <taxon>Bacilli</taxon>
        <taxon>Lactobacillales</taxon>
        <taxon>Streptococcaceae</taxon>
        <taxon>Streptococcus</taxon>
    </lineage>
</organism>
<evidence type="ECO:0000255" key="1">
    <source>
        <dbReference type="HAMAP-Rule" id="MF_00300"/>
    </source>
</evidence>
<comment type="function">
    <text evidence="1">Catalyzes the anti-1,4-elimination of the C-3 phosphate and the C-6 proR hydrogen from 5-enolpyruvylshikimate-3-phosphate (EPSP) to yield chorismate, which is the branch point compound that serves as the starting substrate for the three terminal pathways of aromatic amino acid biosynthesis. This reaction introduces a second double bond into the aromatic ring system.</text>
</comment>
<comment type="catalytic activity">
    <reaction evidence="1">
        <text>5-O-(1-carboxyvinyl)-3-phosphoshikimate = chorismate + phosphate</text>
        <dbReference type="Rhea" id="RHEA:21020"/>
        <dbReference type="ChEBI" id="CHEBI:29748"/>
        <dbReference type="ChEBI" id="CHEBI:43474"/>
        <dbReference type="ChEBI" id="CHEBI:57701"/>
        <dbReference type="EC" id="4.2.3.5"/>
    </reaction>
</comment>
<comment type="cofactor">
    <cofactor evidence="1">
        <name>FMNH2</name>
        <dbReference type="ChEBI" id="CHEBI:57618"/>
    </cofactor>
    <text evidence="1">Reduced FMN (FMNH(2)).</text>
</comment>
<comment type="pathway">
    <text evidence="1">Metabolic intermediate biosynthesis; chorismate biosynthesis; chorismate from D-erythrose 4-phosphate and phosphoenolpyruvate: step 7/7.</text>
</comment>
<comment type="subunit">
    <text evidence="1">Homotetramer.</text>
</comment>
<comment type="similarity">
    <text evidence="1">Belongs to the chorismate synthase family.</text>
</comment>
<accession>Q3K0D5</accession>
<proteinExistence type="inferred from homology"/>
<gene>
    <name evidence="1" type="primary">aroC</name>
    <name type="ordered locus">SAK_1410</name>
</gene>
<feature type="chain" id="PRO_0000256344" description="Chorismate synthase">
    <location>
        <begin position="1"/>
        <end position="388"/>
    </location>
</feature>
<feature type="binding site" evidence="1">
    <location>
        <position position="39"/>
    </location>
    <ligand>
        <name>NADP(+)</name>
        <dbReference type="ChEBI" id="CHEBI:58349"/>
    </ligand>
</feature>
<feature type="binding site" evidence="1">
    <location>
        <position position="45"/>
    </location>
    <ligand>
        <name>NADP(+)</name>
        <dbReference type="ChEBI" id="CHEBI:58349"/>
    </ligand>
</feature>
<feature type="binding site" evidence="1">
    <location>
        <begin position="130"/>
        <end position="132"/>
    </location>
    <ligand>
        <name>FMN</name>
        <dbReference type="ChEBI" id="CHEBI:58210"/>
    </ligand>
</feature>
<feature type="binding site" evidence="1">
    <location>
        <begin position="251"/>
        <end position="252"/>
    </location>
    <ligand>
        <name>FMN</name>
        <dbReference type="ChEBI" id="CHEBI:58210"/>
    </ligand>
</feature>
<feature type="binding site" evidence="1">
    <location>
        <position position="296"/>
    </location>
    <ligand>
        <name>FMN</name>
        <dbReference type="ChEBI" id="CHEBI:58210"/>
    </ligand>
</feature>
<feature type="binding site" evidence="1">
    <location>
        <begin position="311"/>
        <end position="315"/>
    </location>
    <ligand>
        <name>FMN</name>
        <dbReference type="ChEBI" id="CHEBI:58210"/>
    </ligand>
</feature>
<feature type="binding site" evidence="1">
    <location>
        <position position="337"/>
    </location>
    <ligand>
        <name>FMN</name>
        <dbReference type="ChEBI" id="CHEBI:58210"/>
    </ligand>
</feature>